<reference key="1">
    <citation type="journal article" date="2002" name="Nature">
        <title>Comparison of the genomes of two Xanthomonas pathogens with differing host specificities.</title>
        <authorList>
            <person name="da Silva A.C.R."/>
            <person name="Ferro J.A."/>
            <person name="Reinach F.C."/>
            <person name="Farah C.S."/>
            <person name="Furlan L.R."/>
            <person name="Quaggio R.B."/>
            <person name="Monteiro-Vitorello C.B."/>
            <person name="Van Sluys M.A."/>
            <person name="Almeida N.F. Jr."/>
            <person name="Alves L.M.C."/>
            <person name="do Amaral A.M."/>
            <person name="Bertolini M.C."/>
            <person name="Camargo L.E.A."/>
            <person name="Camarotte G."/>
            <person name="Cannavan F."/>
            <person name="Cardozo J."/>
            <person name="Chambergo F."/>
            <person name="Ciapina L.P."/>
            <person name="Cicarelli R.M.B."/>
            <person name="Coutinho L.L."/>
            <person name="Cursino-Santos J.R."/>
            <person name="El-Dorry H."/>
            <person name="Faria J.B."/>
            <person name="Ferreira A.J.S."/>
            <person name="Ferreira R.C.C."/>
            <person name="Ferro M.I.T."/>
            <person name="Formighieri E.F."/>
            <person name="Franco M.C."/>
            <person name="Greggio C.C."/>
            <person name="Gruber A."/>
            <person name="Katsuyama A.M."/>
            <person name="Kishi L.T."/>
            <person name="Leite R.P."/>
            <person name="Lemos E.G.M."/>
            <person name="Lemos M.V.F."/>
            <person name="Locali E.C."/>
            <person name="Machado M.A."/>
            <person name="Madeira A.M.B.N."/>
            <person name="Martinez-Rossi N.M."/>
            <person name="Martins E.C."/>
            <person name="Meidanis J."/>
            <person name="Menck C.F.M."/>
            <person name="Miyaki C.Y."/>
            <person name="Moon D.H."/>
            <person name="Moreira L.M."/>
            <person name="Novo M.T.M."/>
            <person name="Okura V.K."/>
            <person name="Oliveira M.C."/>
            <person name="Oliveira V.R."/>
            <person name="Pereira H.A."/>
            <person name="Rossi A."/>
            <person name="Sena J.A.D."/>
            <person name="Silva C."/>
            <person name="de Souza R.F."/>
            <person name="Spinola L.A.F."/>
            <person name="Takita M.A."/>
            <person name="Tamura R.E."/>
            <person name="Teixeira E.C."/>
            <person name="Tezza R.I.D."/>
            <person name="Trindade dos Santos M."/>
            <person name="Truffi D."/>
            <person name="Tsai S.M."/>
            <person name="White F.F."/>
            <person name="Setubal J.C."/>
            <person name="Kitajima J.P."/>
        </authorList>
    </citation>
    <scope>NUCLEOTIDE SEQUENCE [LARGE SCALE GENOMIC DNA]</scope>
    <source>
        <strain>306</strain>
    </source>
</reference>
<accession>Q8PNS6</accession>
<protein>
    <recommendedName>
        <fullName evidence="1">Elongation factor G</fullName>
        <shortName evidence="1">EF-G</shortName>
    </recommendedName>
</protein>
<dbReference type="EMBL" id="AE008923">
    <property type="protein sequence ID" value="AAM35852.1"/>
    <property type="molecule type" value="Genomic_DNA"/>
</dbReference>
<dbReference type="RefSeq" id="WP_005917595.1">
    <property type="nucleotide sequence ID" value="NC_003919.1"/>
</dbReference>
<dbReference type="SMR" id="Q8PNS6"/>
<dbReference type="GeneID" id="66910155"/>
<dbReference type="KEGG" id="xac:XAC0969"/>
<dbReference type="eggNOG" id="COG0480">
    <property type="taxonomic scope" value="Bacteria"/>
</dbReference>
<dbReference type="HOGENOM" id="CLU_002794_4_1_6"/>
<dbReference type="Proteomes" id="UP000000576">
    <property type="component" value="Chromosome"/>
</dbReference>
<dbReference type="GO" id="GO:0005737">
    <property type="term" value="C:cytoplasm"/>
    <property type="evidence" value="ECO:0007669"/>
    <property type="project" value="UniProtKB-SubCell"/>
</dbReference>
<dbReference type="GO" id="GO:0005525">
    <property type="term" value="F:GTP binding"/>
    <property type="evidence" value="ECO:0007669"/>
    <property type="project" value="UniProtKB-UniRule"/>
</dbReference>
<dbReference type="GO" id="GO:0003924">
    <property type="term" value="F:GTPase activity"/>
    <property type="evidence" value="ECO:0007669"/>
    <property type="project" value="InterPro"/>
</dbReference>
<dbReference type="GO" id="GO:0097216">
    <property type="term" value="F:guanosine tetraphosphate binding"/>
    <property type="evidence" value="ECO:0007669"/>
    <property type="project" value="UniProtKB-ARBA"/>
</dbReference>
<dbReference type="GO" id="GO:0003746">
    <property type="term" value="F:translation elongation factor activity"/>
    <property type="evidence" value="ECO:0007669"/>
    <property type="project" value="UniProtKB-UniRule"/>
</dbReference>
<dbReference type="GO" id="GO:0032790">
    <property type="term" value="P:ribosome disassembly"/>
    <property type="evidence" value="ECO:0007669"/>
    <property type="project" value="TreeGrafter"/>
</dbReference>
<dbReference type="CDD" id="cd01886">
    <property type="entry name" value="EF-G"/>
    <property type="match status" value="1"/>
</dbReference>
<dbReference type="CDD" id="cd16262">
    <property type="entry name" value="EFG_III"/>
    <property type="match status" value="1"/>
</dbReference>
<dbReference type="CDD" id="cd01434">
    <property type="entry name" value="EFG_mtEFG1_IV"/>
    <property type="match status" value="1"/>
</dbReference>
<dbReference type="CDD" id="cd03713">
    <property type="entry name" value="EFG_mtEFG_C"/>
    <property type="match status" value="1"/>
</dbReference>
<dbReference type="CDD" id="cd04088">
    <property type="entry name" value="EFG_mtEFG_II"/>
    <property type="match status" value="1"/>
</dbReference>
<dbReference type="FunFam" id="2.40.30.10:FF:000006">
    <property type="entry name" value="Elongation factor G"/>
    <property type="match status" value="1"/>
</dbReference>
<dbReference type="FunFam" id="3.30.230.10:FF:000003">
    <property type="entry name" value="Elongation factor G"/>
    <property type="match status" value="1"/>
</dbReference>
<dbReference type="FunFam" id="3.30.70.240:FF:000001">
    <property type="entry name" value="Elongation factor G"/>
    <property type="match status" value="1"/>
</dbReference>
<dbReference type="FunFam" id="3.30.70.870:FF:000001">
    <property type="entry name" value="Elongation factor G"/>
    <property type="match status" value="1"/>
</dbReference>
<dbReference type="FunFam" id="3.40.50.300:FF:000029">
    <property type="entry name" value="Elongation factor G"/>
    <property type="match status" value="1"/>
</dbReference>
<dbReference type="Gene3D" id="3.30.230.10">
    <property type="match status" value="1"/>
</dbReference>
<dbReference type="Gene3D" id="3.30.70.240">
    <property type="match status" value="1"/>
</dbReference>
<dbReference type="Gene3D" id="3.30.70.870">
    <property type="entry name" value="Elongation Factor G (Translational Gtpase), domain 3"/>
    <property type="match status" value="1"/>
</dbReference>
<dbReference type="Gene3D" id="3.40.50.300">
    <property type="entry name" value="P-loop containing nucleotide triphosphate hydrolases"/>
    <property type="match status" value="1"/>
</dbReference>
<dbReference type="Gene3D" id="2.40.30.10">
    <property type="entry name" value="Translation factors"/>
    <property type="match status" value="1"/>
</dbReference>
<dbReference type="HAMAP" id="MF_00054_B">
    <property type="entry name" value="EF_G_EF_2_B"/>
    <property type="match status" value="1"/>
</dbReference>
<dbReference type="InterPro" id="IPR041095">
    <property type="entry name" value="EFG_II"/>
</dbReference>
<dbReference type="InterPro" id="IPR009022">
    <property type="entry name" value="EFG_III"/>
</dbReference>
<dbReference type="InterPro" id="IPR035647">
    <property type="entry name" value="EFG_III/V"/>
</dbReference>
<dbReference type="InterPro" id="IPR047872">
    <property type="entry name" value="EFG_IV"/>
</dbReference>
<dbReference type="InterPro" id="IPR035649">
    <property type="entry name" value="EFG_V"/>
</dbReference>
<dbReference type="InterPro" id="IPR000640">
    <property type="entry name" value="EFG_V-like"/>
</dbReference>
<dbReference type="InterPro" id="IPR004161">
    <property type="entry name" value="EFTu-like_2"/>
</dbReference>
<dbReference type="InterPro" id="IPR031157">
    <property type="entry name" value="G_TR_CS"/>
</dbReference>
<dbReference type="InterPro" id="IPR027417">
    <property type="entry name" value="P-loop_NTPase"/>
</dbReference>
<dbReference type="InterPro" id="IPR020568">
    <property type="entry name" value="Ribosomal_Su5_D2-typ_SF"/>
</dbReference>
<dbReference type="InterPro" id="IPR014721">
    <property type="entry name" value="Ribsml_uS5_D2-typ_fold_subgr"/>
</dbReference>
<dbReference type="InterPro" id="IPR005225">
    <property type="entry name" value="Small_GTP-bd"/>
</dbReference>
<dbReference type="InterPro" id="IPR000795">
    <property type="entry name" value="T_Tr_GTP-bd_dom"/>
</dbReference>
<dbReference type="InterPro" id="IPR009000">
    <property type="entry name" value="Transl_B-barrel_sf"/>
</dbReference>
<dbReference type="InterPro" id="IPR004540">
    <property type="entry name" value="Transl_elong_EFG/EF2"/>
</dbReference>
<dbReference type="InterPro" id="IPR005517">
    <property type="entry name" value="Transl_elong_EFG/EF2_IV"/>
</dbReference>
<dbReference type="NCBIfam" id="TIGR00484">
    <property type="entry name" value="EF-G"/>
    <property type="match status" value="1"/>
</dbReference>
<dbReference type="NCBIfam" id="NF009381">
    <property type="entry name" value="PRK12740.1-5"/>
    <property type="match status" value="1"/>
</dbReference>
<dbReference type="NCBIfam" id="TIGR00231">
    <property type="entry name" value="small_GTP"/>
    <property type="match status" value="1"/>
</dbReference>
<dbReference type="PANTHER" id="PTHR43261:SF1">
    <property type="entry name" value="RIBOSOME-RELEASING FACTOR 2, MITOCHONDRIAL"/>
    <property type="match status" value="1"/>
</dbReference>
<dbReference type="PANTHER" id="PTHR43261">
    <property type="entry name" value="TRANSLATION ELONGATION FACTOR G-RELATED"/>
    <property type="match status" value="1"/>
</dbReference>
<dbReference type="Pfam" id="PF00679">
    <property type="entry name" value="EFG_C"/>
    <property type="match status" value="1"/>
</dbReference>
<dbReference type="Pfam" id="PF14492">
    <property type="entry name" value="EFG_III"/>
    <property type="match status" value="1"/>
</dbReference>
<dbReference type="Pfam" id="PF03764">
    <property type="entry name" value="EFG_IV"/>
    <property type="match status" value="1"/>
</dbReference>
<dbReference type="Pfam" id="PF00009">
    <property type="entry name" value="GTP_EFTU"/>
    <property type="match status" value="1"/>
</dbReference>
<dbReference type="Pfam" id="PF03144">
    <property type="entry name" value="GTP_EFTU_D2"/>
    <property type="match status" value="1"/>
</dbReference>
<dbReference type="PRINTS" id="PR00315">
    <property type="entry name" value="ELONGATNFCT"/>
</dbReference>
<dbReference type="SMART" id="SM00838">
    <property type="entry name" value="EFG_C"/>
    <property type="match status" value="1"/>
</dbReference>
<dbReference type="SMART" id="SM00889">
    <property type="entry name" value="EFG_IV"/>
    <property type="match status" value="1"/>
</dbReference>
<dbReference type="SUPFAM" id="SSF54980">
    <property type="entry name" value="EF-G C-terminal domain-like"/>
    <property type="match status" value="2"/>
</dbReference>
<dbReference type="SUPFAM" id="SSF52540">
    <property type="entry name" value="P-loop containing nucleoside triphosphate hydrolases"/>
    <property type="match status" value="1"/>
</dbReference>
<dbReference type="SUPFAM" id="SSF54211">
    <property type="entry name" value="Ribosomal protein S5 domain 2-like"/>
    <property type="match status" value="1"/>
</dbReference>
<dbReference type="SUPFAM" id="SSF50447">
    <property type="entry name" value="Translation proteins"/>
    <property type="match status" value="1"/>
</dbReference>
<dbReference type="PROSITE" id="PS00301">
    <property type="entry name" value="G_TR_1"/>
    <property type="match status" value="1"/>
</dbReference>
<dbReference type="PROSITE" id="PS51722">
    <property type="entry name" value="G_TR_2"/>
    <property type="match status" value="1"/>
</dbReference>
<name>EFG_XANAC</name>
<feature type="chain" id="PRO_0000091269" description="Elongation factor G">
    <location>
        <begin position="1"/>
        <end position="705"/>
    </location>
</feature>
<feature type="domain" description="tr-type G">
    <location>
        <begin position="8"/>
        <end position="290"/>
    </location>
</feature>
<feature type="region of interest" description="Disordered" evidence="2">
    <location>
        <begin position="290"/>
        <end position="309"/>
    </location>
</feature>
<feature type="binding site" evidence="1">
    <location>
        <begin position="17"/>
        <end position="24"/>
    </location>
    <ligand>
        <name>GTP</name>
        <dbReference type="ChEBI" id="CHEBI:37565"/>
    </ligand>
</feature>
<feature type="binding site" evidence="1">
    <location>
        <begin position="88"/>
        <end position="92"/>
    </location>
    <ligand>
        <name>GTP</name>
        <dbReference type="ChEBI" id="CHEBI:37565"/>
    </ligand>
</feature>
<feature type="binding site" evidence="1">
    <location>
        <begin position="142"/>
        <end position="145"/>
    </location>
    <ligand>
        <name>GTP</name>
        <dbReference type="ChEBI" id="CHEBI:37565"/>
    </ligand>
</feature>
<keyword id="KW-0963">Cytoplasm</keyword>
<keyword id="KW-0251">Elongation factor</keyword>
<keyword id="KW-0342">GTP-binding</keyword>
<keyword id="KW-0547">Nucleotide-binding</keyword>
<keyword id="KW-0648">Protein biosynthesis</keyword>
<sequence length="705" mass="77635">MARTTPIERYRNFGIMAHIDAGKTTTSERILFYTGVSHKIGEVHDGAAVMDWMEQEQERGITITSAATTAFWSGMDKSMPQHRFNIIDTPGHVDFTIEVERSLRVLDGAVFVLCAVGGVQPQSETVWRQANKYSVPRMAFVNKMDRTGANFDKVVEQLKARLGAYAVPMQVPIGAEDGFEGVVDLLKMKAIHWDTASQGTTFEYRDIPADLVDVATEARSFMVEAAAEASEDLMDKYLNEGDLSEQEILSGLRERTLKVEIVPVFCGSAFKNKGVQAMLDGVVHLLPSPADRPPVQGIDEDEKEDTRAATDTAPFSALAFKIMTDPFVGSLTFFRVYSGTLNSGDQVYNPVKSKKERVGRILQMHSNNREEIKEVRAGDIAAAVGLKDVTTGDTLCAQDKIITLERMVFPEPVISMAVEPKTKSDQEKMGMALGRLAQEDPSFRVKTDEESGQTIISGMGELHLDIIVDRMRREFNVEANVGKPQVAYRETIRKSDVKSDYKHAKQSGGKGQYGHVVIELSPMTEEERKSDNVKDDFLFVNDITGGIIPKEFIPSVEKGLRETITSGPIAGFPVVGVKVKLVFGSYHDVDSSEMAFKLAASMAFKQGFAKASPVLLEPIMKVEIVSPEDYLGDVMGDVSRRRGVLQGQDDSPSGKIINAMIPLGEMFGYATSLRSMSQGRATFSMEFDHYEEAPANIADAVTKKG</sequence>
<comment type="function">
    <text evidence="1">Catalyzes the GTP-dependent ribosomal translocation step during translation elongation. During this step, the ribosome changes from the pre-translocational (PRE) to the post-translocational (POST) state as the newly formed A-site-bound peptidyl-tRNA and P-site-bound deacylated tRNA move to the P and E sites, respectively. Catalyzes the coordinated movement of the two tRNA molecules, the mRNA and conformational changes in the ribosome.</text>
</comment>
<comment type="subcellular location">
    <subcellularLocation>
        <location evidence="1">Cytoplasm</location>
    </subcellularLocation>
</comment>
<comment type="similarity">
    <text evidence="1">Belongs to the TRAFAC class translation factor GTPase superfamily. Classic translation factor GTPase family. EF-G/EF-2 subfamily.</text>
</comment>
<evidence type="ECO:0000255" key="1">
    <source>
        <dbReference type="HAMAP-Rule" id="MF_00054"/>
    </source>
</evidence>
<evidence type="ECO:0000256" key="2">
    <source>
        <dbReference type="SAM" id="MobiDB-lite"/>
    </source>
</evidence>
<organism>
    <name type="scientific">Xanthomonas axonopodis pv. citri (strain 306)</name>
    <dbReference type="NCBI Taxonomy" id="190486"/>
    <lineage>
        <taxon>Bacteria</taxon>
        <taxon>Pseudomonadati</taxon>
        <taxon>Pseudomonadota</taxon>
        <taxon>Gammaproteobacteria</taxon>
        <taxon>Lysobacterales</taxon>
        <taxon>Lysobacteraceae</taxon>
        <taxon>Xanthomonas</taxon>
    </lineage>
</organism>
<proteinExistence type="inferred from homology"/>
<gene>
    <name evidence="1" type="primary">fusA</name>
    <name type="ordered locus">XAC0969</name>
</gene>